<gene>
    <name type="primary">LON1</name>
</gene>
<feature type="chain" id="PRO_0000026737" description="Lon protease homolog 2, peroxisomal">
    <location>
        <begin position="1"/>
        <end position="885"/>
    </location>
</feature>
<feature type="domain" description="Lon N-terminal" evidence="3">
    <location>
        <begin position="12"/>
        <end position="256"/>
    </location>
</feature>
<feature type="domain" description="Lon proteolytic" evidence="2">
    <location>
        <begin position="690"/>
        <end position="875"/>
    </location>
</feature>
<feature type="region of interest" description="Disordered" evidence="4">
    <location>
        <begin position="70"/>
        <end position="104"/>
    </location>
</feature>
<feature type="short sequence motif" description="Microbody targeting signal" evidence="1">
    <location>
        <begin position="883"/>
        <end position="885"/>
    </location>
</feature>
<feature type="compositionally biased region" description="Gly residues" evidence="4">
    <location>
        <begin position="77"/>
        <end position="86"/>
    </location>
</feature>
<feature type="compositionally biased region" description="Basic and acidic residues" evidence="4">
    <location>
        <begin position="94"/>
        <end position="104"/>
    </location>
</feature>
<feature type="active site" evidence="1">
    <location>
        <position position="781"/>
    </location>
</feature>
<feature type="active site" evidence="1">
    <location>
        <position position="824"/>
    </location>
</feature>
<feature type="binding site" evidence="1">
    <location>
        <begin position="409"/>
        <end position="416"/>
    </location>
    <ligand>
        <name>ATP</name>
        <dbReference type="ChEBI" id="CHEBI:30616"/>
    </ligand>
</feature>
<name>LONP2_MAIZE</name>
<comment type="function">
    <text evidence="1">ATP-dependent serine protease that mediates the selective degradation of misfolded and unassembled polypeptides in the peroxisomal matrix. Necessary for type 2 peroxisome targeting signal (PTS2)-containing protein processing and facilitates peroxisome matrix protein import.</text>
</comment>
<comment type="catalytic activity">
    <reaction evidence="1">
        <text>Hydrolysis of proteins in presence of ATP.</text>
        <dbReference type="EC" id="3.4.21.53"/>
    </reaction>
</comment>
<comment type="subcellular location">
    <subcellularLocation>
        <location evidence="1">Peroxisome matrix</location>
    </subcellularLocation>
</comment>
<comment type="similarity">
    <text evidence="1">Belongs to the peptidase S16 family.</text>
</comment>
<keyword id="KW-0067">ATP-binding</keyword>
<keyword id="KW-0378">Hydrolase</keyword>
<keyword id="KW-0547">Nucleotide-binding</keyword>
<keyword id="KW-0576">Peroxisome</keyword>
<keyword id="KW-0645">Protease</keyword>
<keyword id="KW-1185">Reference proteome</keyword>
<keyword id="KW-0720">Serine protease</keyword>
<organism>
    <name type="scientific">Zea mays</name>
    <name type="common">Maize</name>
    <dbReference type="NCBI Taxonomy" id="4577"/>
    <lineage>
        <taxon>Eukaryota</taxon>
        <taxon>Viridiplantae</taxon>
        <taxon>Streptophyta</taxon>
        <taxon>Embryophyta</taxon>
        <taxon>Tracheophyta</taxon>
        <taxon>Spermatophyta</taxon>
        <taxon>Magnoliopsida</taxon>
        <taxon>Liliopsida</taxon>
        <taxon>Poales</taxon>
        <taxon>Poaceae</taxon>
        <taxon>PACMAD clade</taxon>
        <taxon>Panicoideae</taxon>
        <taxon>Andropogonodae</taxon>
        <taxon>Andropogoneae</taxon>
        <taxon>Tripsacinae</taxon>
        <taxon>Zea</taxon>
    </lineage>
</organism>
<evidence type="ECO:0000255" key="1">
    <source>
        <dbReference type="HAMAP-Rule" id="MF_03121"/>
    </source>
</evidence>
<evidence type="ECO:0000255" key="2">
    <source>
        <dbReference type="PROSITE-ProRule" id="PRU01122"/>
    </source>
</evidence>
<evidence type="ECO:0000255" key="3">
    <source>
        <dbReference type="PROSITE-ProRule" id="PRU01123"/>
    </source>
</evidence>
<evidence type="ECO:0000256" key="4">
    <source>
        <dbReference type="SAM" id="MobiDB-lite"/>
    </source>
</evidence>
<accession>P93647</accession>
<dbReference type="EC" id="3.4.21.53" evidence="1"/>
<dbReference type="EMBL" id="U85494">
    <property type="protein sequence ID" value="AAC50011.1"/>
    <property type="molecule type" value="mRNA"/>
</dbReference>
<dbReference type="PIR" id="T04321">
    <property type="entry name" value="T04321"/>
</dbReference>
<dbReference type="RefSeq" id="NP_001105903.1">
    <property type="nucleotide sequence ID" value="NM_001112433.1"/>
</dbReference>
<dbReference type="SMR" id="P93647"/>
<dbReference type="FunCoup" id="P93647">
    <property type="interactions" value="678"/>
</dbReference>
<dbReference type="STRING" id="4577.P93647"/>
<dbReference type="MEROPS" id="S16.003"/>
<dbReference type="PaxDb" id="4577-GRMZM2G109560_P01"/>
<dbReference type="EnsemblPlants" id="Zm00001eb319680_T001">
    <property type="protein sequence ID" value="Zm00001eb319680_P001"/>
    <property type="gene ID" value="Zm00001eb319680"/>
</dbReference>
<dbReference type="GeneID" id="732820"/>
<dbReference type="Gramene" id="Zm00001eb319680_T001">
    <property type="protein sequence ID" value="Zm00001eb319680_P001"/>
    <property type="gene ID" value="Zm00001eb319680"/>
</dbReference>
<dbReference type="KEGG" id="zma:732820"/>
<dbReference type="eggNOG" id="KOG2004">
    <property type="taxonomic scope" value="Eukaryota"/>
</dbReference>
<dbReference type="HOGENOM" id="CLU_004109_4_0_1"/>
<dbReference type="InParanoid" id="P93647"/>
<dbReference type="OrthoDB" id="2411602at2759"/>
<dbReference type="BRENDA" id="3.6.4.7">
    <property type="organism ID" value="6752"/>
</dbReference>
<dbReference type="Proteomes" id="UP000007305">
    <property type="component" value="Chromosome 7"/>
</dbReference>
<dbReference type="ExpressionAtlas" id="P93647">
    <property type="expression patterns" value="baseline and differential"/>
</dbReference>
<dbReference type="GO" id="GO:0005739">
    <property type="term" value="C:mitochondrion"/>
    <property type="evidence" value="ECO:0007669"/>
    <property type="project" value="GOC"/>
</dbReference>
<dbReference type="GO" id="GO:0005782">
    <property type="term" value="C:peroxisomal matrix"/>
    <property type="evidence" value="ECO:0000318"/>
    <property type="project" value="GO_Central"/>
</dbReference>
<dbReference type="GO" id="GO:0005524">
    <property type="term" value="F:ATP binding"/>
    <property type="evidence" value="ECO:0007669"/>
    <property type="project" value="UniProtKB-UniRule"/>
</dbReference>
<dbReference type="GO" id="GO:0016887">
    <property type="term" value="F:ATP hydrolysis activity"/>
    <property type="evidence" value="ECO:0007669"/>
    <property type="project" value="UniProtKB-UniRule"/>
</dbReference>
<dbReference type="GO" id="GO:0004176">
    <property type="term" value="F:ATP-dependent peptidase activity"/>
    <property type="evidence" value="ECO:0007669"/>
    <property type="project" value="UniProtKB-UniRule"/>
</dbReference>
<dbReference type="GO" id="GO:0004252">
    <property type="term" value="F:serine-type endopeptidase activity"/>
    <property type="evidence" value="ECO:0007669"/>
    <property type="project" value="UniProtKB-UniRule"/>
</dbReference>
<dbReference type="GO" id="GO:0032042">
    <property type="term" value="P:mitochondrial DNA metabolic process"/>
    <property type="evidence" value="ECO:0000314"/>
    <property type="project" value="AgBase"/>
</dbReference>
<dbReference type="GO" id="GO:0016558">
    <property type="term" value="P:protein import into peroxisome matrix"/>
    <property type="evidence" value="ECO:0007669"/>
    <property type="project" value="UniProtKB-UniRule"/>
</dbReference>
<dbReference type="GO" id="GO:0016485">
    <property type="term" value="P:protein processing"/>
    <property type="evidence" value="ECO:0000318"/>
    <property type="project" value="GO_Central"/>
</dbReference>
<dbReference type="GO" id="GO:0006515">
    <property type="term" value="P:protein quality control for misfolded or incompletely synthesized proteins"/>
    <property type="evidence" value="ECO:0007669"/>
    <property type="project" value="UniProtKB-UniRule"/>
</dbReference>
<dbReference type="GO" id="GO:0006625">
    <property type="term" value="P:protein targeting to peroxisome"/>
    <property type="evidence" value="ECO:0000318"/>
    <property type="project" value="GO_Central"/>
</dbReference>
<dbReference type="GO" id="GO:0009408">
    <property type="term" value="P:response to heat"/>
    <property type="evidence" value="ECO:0000314"/>
    <property type="project" value="AgBase"/>
</dbReference>
<dbReference type="CDD" id="cd19500">
    <property type="entry name" value="RecA-like_Lon"/>
    <property type="match status" value="1"/>
</dbReference>
<dbReference type="FunFam" id="1.20.5.5270:FF:000002">
    <property type="entry name" value="Lon protease homolog"/>
    <property type="match status" value="1"/>
</dbReference>
<dbReference type="FunFam" id="1.10.8.60:FF:000095">
    <property type="entry name" value="Lon protease homolog 2, peroxisomal"/>
    <property type="match status" value="1"/>
</dbReference>
<dbReference type="FunFam" id="1.20.58.1480:FF:000005">
    <property type="entry name" value="Lon protease homolog 2, peroxisomal"/>
    <property type="match status" value="1"/>
</dbReference>
<dbReference type="FunFam" id="3.30.230.10:FF:000019">
    <property type="entry name" value="Lon protease homolog 2, peroxisomal"/>
    <property type="match status" value="1"/>
</dbReference>
<dbReference type="FunFam" id="3.40.50.300:FF:000651">
    <property type="entry name" value="Lon protease homolog 2, peroxisomal"/>
    <property type="match status" value="1"/>
</dbReference>
<dbReference type="Gene3D" id="1.10.8.60">
    <property type="match status" value="1"/>
</dbReference>
<dbReference type="Gene3D" id="1.20.5.5270">
    <property type="match status" value="1"/>
</dbReference>
<dbReference type="Gene3D" id="1.20.58.1480">
    <property type="match status" value="1"/>
</dbReference>
<dbReference type="Gene3D" id="3.30.230.10">
    <property type="match status" value="1"/>
</dbReference>
<dbReference type="Gene3D" id="2.30.130.40">
    <property type="entry name" value="LON domain-like"/>
    <property type="match status" value="1"/>
</dbReference>
<dbReference type="Gene3D" id="3.40.50.300">
    <property type="entry name" value="P-loop containing nucleotide triphosphate hydrolases"/>
    <property type="match status" value="1"/>
</dbReference>
<dbReference type="HAMAP" id="MF_03121">
    <property type="entry name" value="lonp2_euk"/>
    <property type="match status" value="1"/>
</dbReference>
<dbReference type="InterPro" id="IPR003593">
    <property type="entry name" value="AAA+_ATPase"/>
</dbReference>
<dbReference type="InterPro" id="IPR003959">
    <property type="entry name" value="ATPase_AAA_core"/>
</dbReference>
<dbReference type="InterPro" id="IPR004815">
    <property type="entry name" value="Lon_bac/euk-typ"/>
</dbReference>
<dbReference type="InterPro" id="IPR054594">
    <property type="entry name" value="Lon_lid"/>
</dbReference>
<dbReference type="InterPro" id="IPR008269">
    <property type="entry name" value="Lon_proteolytic"/>
</dbReference>
<dbReference type="InterPro" id="IPR027065">
    <property type="entry name" value="Lon_Prtase"/>
</dbReference>
<dbReference type="InterPro" id="IPR003111">
    <property type="entry name" value="Lon_prtase_N"/>
</dbReference>
<dbReference type="InterPro" id="IPR046336">
    <property type="entry name" value="Lon_prtase_N_sf"/>
</dbReference>
<dbReference type="InterPro" id="IPR027501">
    <property type="entry name" value="Lonp2_euk"/>
</dbReference>
<dbReference type="InterPro" id="IPR027417">
    <property type="entry name" value="P-loop_NTPase"/>
</dbReference>
<dbReference type="InterPro" id="IPR008268">
    <property type="entry name" value="Peptidase_S16_AS"/>
</dbReference>
<dbReference type="InterPro" id="IPR015947">
    <property type="entry name" value="PUA-like_sf"/>
</dbReference>
<dbReference type="InterPro" id="IPR020568">
    <property type="entry name" value="Ribosomal_Su5_D2-typ_SF"/>
</dbReference>
<dbReference type="InterPro" id="IPR014721">
    <property type="entry name" value="Ribsml_uS5_D2-typ_fold_subgr"/>
</dbReference>
<dbReference type="NCBIfam" id="TIGR00763">
    <property type="entry name" value="lon"/>
    <property type="match status" value="1"/>
</dbReference>
<dbReference type="PANTHER" id="PTHR10046">
    <property type="entry name" value="ATP DEPENDENT LON PROTEASE FAMILY MEMBER"/>
    <property type="match status" value="1"/>
</dbReference>
<dbReference type="Pfam" id="PF00004">
    <property type="entry name" value="AAA"/>
    <property type="match status" value="1"/>
</dbReference>
<dbReference type="Pfam" id="PF05362">
    <property type="entry name" value="Lon_C"/>
    <property type="match status" value="1"/>
</dbReference>
<dbReference type="Pfam" id="PF22667">
    <property type="entry name" value="Lon_lid"/>
    <property type="match status" value="1"/>
</dbReference>
<dbReference type="Pfam" id="PF02190">
    <property type="entry name" value="LON_substr_bdg"/>
    <property type="match status" value="1"/>
</dbReference>
<dbReference type="PIRSF" id="PIRSF001174">
    <property type="entry name" value="Lon_proteas"/>
    <property type="match status" value="1"/>
</dbReference>
<dbReference type="PRINTS" id="PR00830">
    <property type="entry name" value="ENDOLAPTASE"/>
</dbReference>
<dbReference type="SMART" id="SM00382">
    <property type="entry name" value="AAA"/>
    <property type="match status" value="1"/>
</dbReference>
<dbReference type="SMART" id="SM00464">
    <property type="entry name" value="LON"/>
    <property type="match status" value="1"/>
</dbReference>
<dbReference type="SUPFAM" id="SSF52540">
    <property type="entry name" value="P-loop containing nucleoside triphosphate hydrolases"/>
    <property type="match status" value="1"/>
</dbReference>
<dbReference type="SUPFAM" id="SSF88697">
    <property type="entry name" value="PUA domain-like"/>
    <property type="match status" value="1"/>
</dbReference>
<dbReference type="SUPFAM" id="SSF54211">
    <property type="entry name" value="Ribosomal protein S5 domain 2-like"/>
    <property type="match status" value="1"/>
</dbReference>
<dbReference type="PROSITE" id="PS51787">
    <property type="entry name" value="LON_N"/>
    <property type="match status" value="1"/>
</dbReference>
<dbReference type="PROSITE" id="PS51786">
    <property type="entry name" value="LON_PROTEOLYTIC"/>
    <property type="match status" value="1"/>
</dbReference>
<dbReference type="PROSITE" id="PS01046">
    <property type="entry name" value="LON_SER"/>
    <property type="match status" value="1"/>
</dbReference>
<proteinExistence type="evidence at transcript level"/>
<sequence length="885" mass="97733">MSDSPVELPSRLAVLPFRNKVLLPGAIVRIRCTNPSSVKLVEQELWQKEEKGLIGVLPVRDSEATAVGSLLSPGVGSDSGEGGSKVGGSAVESSKQDTKNGKEPIHWHSKGVAARALHLSRGVEKPSGRVTYIVVLEGLCRFSVQELSARGPYHVARVSRLDMTKTELEQAEQDPDLIALSRQFKATAMELISVLEQKQKTVGRTKVLLDTVPVYRLADIFVASFEISFEEQLSMLDSVHLKVRLSKATELVDRHLQSILVAEKITQKVEGQLSKSQKEFLLRQQMRAIKEELGDNDDDEDDVAALERKMQNAGMPANIWKHAQREMRRLRKMQPQQPGYSSSRAYLELLADLPWQKVSEERELDLRVAKESLDQDHYGLTKVKQRIIEYLAVRKLKPDARGPVLCFVGPPGVGKTSLASSIAKALNRKFIRISLGGVKDEADIRGHRRTYIGSMPGRLIDGLKRVSVSNPVMLLDEIDKTGSDVRGDPASALLEVLDPEQNKAFNDHYLNVPFDLSKVIFVATANRMQPIPPPLLDRMEIIELPGYTPEEKLKIAMKHLIPRVLEQHGLSTTNLQIPEAMVKLVIERYTREAGVRNLERNLAALARAAAVKVAEQVKTLRLGKEIQPITTTLLDSRLADGGEVEMEVIPMEHDISNTYENPSPMIVDEAMLEKVLGPPRFDDREAADRVASPGVSVGLVWTSVGGEVQFVEATAMVGKGDLHLTGQLGDVIKESAQLALTWVRARAADLNLSPTSDINLLESRDIHIHFPAGAVPKDGPSAGVTLVTALVSLFSNRKVRADTAMTGEMTLRGLVLPVGGVKDKVLAAHRYGIKRVILPERNLKDLSEVPLPILSDMEILLVKRIEEVLDHAFEGRCPLRSRSKL</sequence>
<reference key="1">
    <citation type="journal article" date="1998" name="Plant Mol. Biol.">
        <title>Maize contains a Lon protease gene that can partially complement a yeast pim1-deletion mutant.</title>
        <authorList>
            <person name="Barakat S."/>
            <person name="Pearce D.A."/>
            <person name="Sherman F."/>
            <person name="Rapp W.D."/>
        </authorList>
    </citation>
    <scope>NUCLEOTIDE SEQUENCE [MRNA]</scope>
    <source>
        <strain>cv. B73</strain>
    </source>
</reference>
<protein>
    <recommendedName>
        <fullName evidence="1">Lon protease homolog 2, peroxisomal</fullName>
        <ecNumber evidence="1">3.4.21.53</ecNumber>
    </recommendedName>
</protein>